<reference key="1">
    <citation type="journal article" date="2004" name="Proc. Natl. Acad. Sci. U.S.A.">
        <title>Complete genomes of two clinical Staphylococcus aureus strains: evidence for the rapid evolution of virulence and drug resistance.</title>
        <authorList>
            <person name="Holden M.T.G."/>
            <person name="Feil E.J."/>
            <person name="Lindsay J.A."/>
            <person name="Peacock S.J."/>
            <person name="Day N.P.J."/>
            <person name="Enright M.C."/>
            <person name="Foster T.J."/>
            <person name="Moore C.E."/>
            <person name="Hurst L."/>
            <person name="Atkin R."/>
            <person name="Barron A."/>
            <person name="Bason N."/>
            <person name="Bentley S.D."/>
            <person name="Chillingworth C."/>
            <person name="Chillingworth T."/>
            <person name="Churcher C."/>
            <person name="Clark L."/>
            <person name="Corton C."/>
            <person name="Cronin A."/>
            <person name="Doggett J."/>
            <person name="Dowd L."/>
            <person name="Feltwell T."/>
            <person name="Hance Z."/>
            <person name="Harris B."/>
            <person name="Hauser H."/>
            <person name="Holroyd S."/>
            <person name="Jagels K."/>
            <person name="James K.D."/>
            <person name="Lennard N."/>
            <person name="Line A."/>
            <person name="Mayes R."/>
            <person name="Moule S."/>
            <person name="Mungall K."/>
            <person name="Ormond D."/>
            <person name="Quail M.A."/>
            <person name="Rabbinowitsch E."/>
            <person name="Rutherford K.M."/>
            <person name="Sanders M."/>
            <person name="Sharp S."/>
            <person name="Simmonds M."/>
            <person name="Stevens K."/>
            <person name="Whitehead S."/>
            <person name="Barrell B.G."/>
            <person name="Spratt B.G."/>
            <person name="Parkhill J."/>
        </authorList>
    </citation>
    <scope>NUCLEOTIDE SEQUENCE [LARGE SCALE GENOMIC DNA]</scope>
    <source>
        <strain>MRSA252</strain>
    </source>
</reference>
<name>ARSB_STAAR</name>
<dbReference type="EMBL" id="BX571856">
    <property type="protein sequence ID" value="CAG40847.1"/>
    <property type="status" value="ALT_INIT"/>
    <property type="molecule type" value="Genomic_DNA"/>
</dbReference>
<dbReference type="SMR" id="Q6GFT0"/>
<dbReference type="KEGG" id="sar:SAR1856"/>
<dbReference type="HOGENOM" id="CLU_043931_1_0_9"/>
<dbReference type="Proteomes" id="UP000000596">
    <property type="component" value="Chromosome"/>
</dbReference>
<dbReference type="GO" id="GO:0005886">
    <property type="term" value="C:plasma membrane"/>
    <property type="evidence" value="ECO:0007669"/>
    <property type="project" value="UniProtKB-SubCell"/>
</dbReference>
<dbReference type="GO" id="GO:0015105">
    <property type="term" value="F:arsenite transmembrane transporter activity"/>
    <property type="evidence" value="ECO:0007669"/>
    <property type="project" value="InterPro"/>
</dbReference>
<dbReference type="GO" id="GO:0046685">
    <property type="term" value="P:response to arsenic-containing substance"/>
    <property type="evidence" value="ECO:0007669"/>
    <property type="project" value="UniProtKB-KW"/>
</dbReference>
<dbReference type="CDD" id="cd01118">
    <property type="entry name" value="ArsB_permease"/>
    <property type="match status" value="1"/>
</dbReference>
<dbReference type="InterPro" id="IPR000802">
    <property type="entry name" value="Arsenical_pump_ArsB"/>
</dbReference>
<dbReference type="NCBIfam" id="TIGR00935">
    <property type="entry name" value="2a45"/>
    <property type="match status" value="1"/>
</dbReference>
<dbReference type="NCBIfam" id="NF033877">
    <property type="entry name" value="arsB_Sta_pI258"/>
    <property type="match status" value="1"/>
</dbReference>
<dbReference type="NCBIfam" id="NF011980">
    <property type="entry name" value="PRK15445.1"/>
    <property type="match status" value="1"/>
</dbReference>
<dbReference type="PANTHER" id="PTHR43302">
    <property type="entry name" value="TRANSPORTER ARSB-RELATED"/>
    <property type="match status" value="1"/>
</dbReference>
<dbReference type="PANTHER" id="PTHR43302:SF5">
    <property type="entry name" value="TRANSPORTER ARSB-RELATED"/>
    <property type="match status" value="1"/>
</dbReference>
<dbReference type="Pfam" id="PF02040">
    <property type="entry name" value="ArsB"/>
    <property type="match status" value="1"/>
</dbReference>
<dbReference type="PRINTS" id="PR00758">
    <property type="entry name" value="ARSENICPUMP"/>
</dbReference>
<accession>Q6GFT0</accession>
<comment type="function">
    <text>Involved in arsenical resistance. Thought to form the channel of an arsenite pump.</text>
</comment>
<comment type="subcellular location">
    <subcellularLocation>
        <location evidence="2">Cell membrane</location>
        <topology evidence="2">Multi-pass membrane protein</topology>
    </subcellularLocation>
</comment>
<comment type="similarity">
    <text evidence="2">Belongs to the ArsB family.</text>
</comment>
<comment type="sequence caution" evidence="2">
    <conflict type="erroneous initiation">
        <sequence resource="EMBL-CDS" id="CAG40847"/>
    </conflict>
</comment>
<keyword id="KW-0059">Arsenical resistance</keyword>
<keyword id="KW-1003">Cell membrane</keyword>
<keyword id="KW-0472">Membrane</keyword>
<keyword id="KW-0812">Transmembrane</keyword>
<keyword id="KW-1133">Transmembrane helix</keyword>
<keyword id="KW-0813">Transport</keyword>
<evidence type="ECO:0000255" key="1"/>
<evidence type="ECO:0000305" key="2"/>
<feature type="chain" id="PRO_0000201473" description="Arsenical pump membrane protein">
    <location>
        <begin position="1"/>
        <end position="429"/>
    </location>
</feature>
<feature type="transmembrane region" description="Helical" evidence="1">
    <location>
        <begin position="3"/>
        <end position="23"/>
    </location>
</feature>
<feature type="transmembrane region" description="Helical" evidence="1">
    <location>
        <begin position="25"/>
        <end position="45"/>
    </location>
</feature>
<feature type="transmembrane region" description="Helical" evidence="1">
    <location>
        <begin position="50"/>
        <end position="70"/>
    </location>
</feature>
<feature type="transmembrane region" description="Helical" evidence="1">
    <location>
        <begin position="99"/>
        <end position="119"/>
    </location>
</feature>
<feature type="transmembrane region" description="Helical" evidence="1">
    <location>
        <begin position="137"/>
        <end position="157"/>
    </location>
</feature>
<feature type="transmembrane region" description="Helical" evidence="1">
    <location>
        <begin position="180"/>
        <end position="200"/>
    </location>
</feature>
<feature type="transmembrane region" description="Helical" evidence="1">
    <location>
        <begin position="222"/>
        <end position="242"/>
    </location>
</feature>
<feature type="transmembrane region" description="Helical" evidence="1">
    <location>
        <begin position="244"/>
        <end position="264"/>
    </location>
</feature>
<feature type="transmembrane region" description="Helical" evidence="1">
    <location>
        <begin position="275"/>
        <end position="295"/>
    </location>
</feature>
<feature type="transmembrane region" description="Helical" evidence="1">
    <location>
        <begin position="316"/>
        <end position="336"/>
    </location>
</feature>
<feature type="transmembrane region" description="Helical" evidence="1">
    <location>
        <begin position="372"/>
        <end position="392"/>
    </location>
</feature>
<feature type="transmembrane region" description="Helical" evidence="1">
    <location>
        <begin position="408"/>
        <end position="428"/>
    </location>
</feature>
<protein>
    <recommendedName>
        <fullName>Arsenical pump membrane protein</fullName>
    </recommendedName>
    <alternativeName>
        <fullName>Arsenic efflux pump protein</fullName>
    </alternativeName>
</protein>
<sequence>MTTLATFIFLVTLLFVLWQPKGLDIGFTALAGAFIAVITGVVSFSDVFEVTGIVWNATLTFVSVILISLILDKVGLFEWSAIHMLHASKGSGLKMFVYIILLGAVVAAFFANDGAALILTPIVLAMVKNIGFSKRAIFPFIIASGFIADTTSLPLIVSNLVNIISADYFNISFSQYLSRMIIPNLFSLLASLLVLWLYFRKAIPKSFDANHIKKPIDAINDLKLFKISWIVLVILLFGYLISEFTKIPVSIFTGIIAFIFLILARKSNAVNIKQVIKGAPWNIVLFSIGMYIVVFGLRNAGITLILAKILEYISNYGLFSTILGMGFISAFLSSIMNNMPTVLIDAIAIGQSNVHGMLKEGLIYANVIGSDLGPKITPIGSLATLLWLHVLTQKDVKISWGTYFKTGIIITIPVLFFTLLGLYLTLILF</sequence>
<organism>
    <name type="scientific">Staphylococcus aureus (strain MRSA252)</name>
    <dbReference type="NCBI Taxonomy" id="282458"/>
    <lineage>
        <taxon>Bacteria</taxon>
        <taxon>Bacillati</taxon>
        <taxon>Bacillota</taxon>
        <taxon>Bacilli</taxon>
        <taxon>Bacillales</taxon>
        <taxon>Staphylococcaceae</taxon>
        <taxon>Staphylococcus</taxon>
    </lineage>
</organism>
<gene>
    <name type="primary">arsB</name>
    <name type="ordered locus">SAR1856</name>
</gene>
<proteinExistence type="inferred from homology"/>